<gene>
    <name evidence="1" type="primary">sat</name>
    <name type="ordered locus">CENSYa_1904</name>
</gene>
<dbReference type="EC" id="2.7.7.4" evidence="1"/>
<dbReference type="EMBL" id="DP000238">
    <property type="protein sequence ID" value="ABK78513.1"/>
    <property type="molecule type" value="Genomic_DNA"/>
</dbReference>
<dbReference type="SMR" id="A0RYU6"/>
<dbReference type="STRING" id="414004.CENSYa_1904"/>
<dbReference type="EnsemblBacteria" id="ABK78513">
    <property type="protein sequence ID" value="ABK78513"/>
    <property type="gene ID" value="CENSYa_1904"/>
</dbReference>
<dbReference type="KEGG" id="csy:CENSYa_1904"/>
<dbReference type="PATRIC" id="fig|414004.10.peg.1739"/>
<dbReference type="HOGENOM" id="CLU_022950_1_1_2"/>
<dbReference type="UniPathway" id="UPA00140">
    <property type="reaction ID" value="UER00204"/>
</dbReference>
<dbReference type="Proteomes" id="UP000000758">
    <property type="component" value="Chromosome"/>
</dbReference>
<dbReference type="GO" id="GO:0005524">
    <property type="term" value="F:ATP binding"/>
    <property type="evidence" value="ECO:0007669"/>
    <property type="project" value="UniProtKB-KW"/>
</dbReference>
<dbReference type="GO" id="GO:0004781">
    <property type="term" value="F:sulfate adenylyltransferase (ATP) activity"/>
    <property type="evidence" value="ECO:0007669"/>
    <property type="project" value="UniProtKB-UniRule"/>
</dbReference>
<dbReference type="GO" id="GO:0070814">
    <property type="term" value="P:hydrogen sulfide biosynthetic process"/>
    <property type="evidence" value="ECO:0007669"/>
    <property type="project" value="UniProtKB-UniRule"/>
</dbReference>
<dbReference type="GO" id="GO:0000103">
    <property type="term" value="P:sulfate assimilation"/>
    <property type="evidence" value="ECO:0007669"/>
    <property type="project" value="UniProtKB-UniRule"/>
</dbReference>
<dbReference type="CDD" id="cd00517">
    <property type="entry name" value="ATPS"/>
    <property type="match status" value="1"/>
</dbReference>
<dbReference type="Gene3D" id="3.40.50.620">
    <property type="entry name" value="HUPs"/>
    <property type="match status" value="1"/>
</dbReference>
<dbReference type="Gene3D" id="3.10.400.10">
    <property type="entry name" value="Sulfate adenylyltransferase"/>
    <property type="match status" value="1"/>
</dbReference>
<dbReference type="HAMAP" id="MF_00066">
    <property type="entry name" value="Sulf_adenylyltr"/>
    <property type="match status" value="1"/>
</dbReference>
<dbReference type="InterPro" id="IPR025980">
    <property type="entry name" value="ATP-Sase_PUA-like_dom"/>
</dbReference>
<dbReference type="InterPro" id="IPR015947">
    <property type="entry name" value="PUA-like_sf"/>
</dbReference>
<dbReference type="InterPro" id="IPR014729">
    <property type="entry name" value="Rossmann-like_a/b/a_fold"/>
</dbReference>
<dbReference type="InterPro" id="IPR020792">
    <property type="entry name" value="SO4_adenylyltransferase_pro"/>
</dbReference>
<dbReference type="InterPro" id="IPR024951">
    <property type="entry name" value="Sulfurylase_cat_dom"/>
</dbReference>
<dbReference type="InterPro" id="IPR002650">
    <property type="entry name" value="Sulphate_adenylyltransferase"/>
</dbReference>
<dbReference type="NCBIfam" id="NF003166">
    <property type="entry name" value="PRK04149.1"/>
    <property type="match status" value="1"/>
</dbReference>
<dbReference type="NCBIfam" id="TIGR00339">
    <property type="entry name" value="sopT"/>
    <property type="match status" value="1"/>
</dbReference>
<dbReference type="PANTHER" id="PTHR43509">
    <property type="match status" value="1"/>
</dbReference>
<dbReference type="PANTHER" id="PTHR43509:SF1">
    <property type="entry name" value="SULFATE ADENYLYLTRANSFERASE"/>
    <property type="match status" value="1"/>
</dbReference>
<dbReference type="Pfam" id="PF01747">
    <property type="entry name" value="ATP-sulfurylase"/>
    <property type="match status" value="1"/>
</dbReference>
<dbReference type="Pfam" id="PF14306">
    <property type="entry name" value="PUA_2"/>
    <property type="match status" value="1"/>
</dbReference>
<dbReference type="SUPFAM" id="SSF52374">
    <property type="entry name" value="Nucleotidylyl transferase"/>
    <property type="match status" value="1"/>
</dbReference>
<dbReference type="SUPFAM" id="SSF88697">
    <property type="entry name" value="PUA domain-like"/>
    <property type="match status" value="1"/>
</dbReference>
<name>SAT_CENSY</name>
<protein>
    <recommendedName>
        <fullName evidence="1">Sulfate adenylyltransferase</fullName>
        <ecNumber evidence="1">2.7.7.4</ecNumber>
    </recommendedName>
    <alternativeName>
        <fullName evidence="1">ATP-sulfurylase</fullName>
    </alternativeName>
    <alternativeName>
        <fullName evidence="1">Sulfate adenylate transferase</fullName>
        <shortName evidence="1">SAT</shortName>
    </alternativeName>
</protein>
<sequence>MSEGNIEPHGGRLISRLYSGDASGMEKAAISQELASDVENIADGIFSPLEGFLGRNDFEAVLEKGRLADGTAWTIPIVFDADAAEAARIKAAGDVLLEDPSGSKVAVLHAEEEYPFDKKAAAARVYGTDDAAHPGVSRMLSMKERLVGGRIDLVDRPEKTEIRRLRMSPVETRHAFAESGWKTTVAFQTRNPPHVAHEMLQKTSITTRDGVFVNPIVGRKKPGDFADEVIVKCYEEMIKHYYPENRCRLGTLHTEMRYAGPREAIHHGIMRQNYGCTHIIIGRDHAGVGKYYDPFAAHRIFDDYPDLGITPIFFPAFFYCRKCLTYTNPKACPHGEGEREQISGTALRDLIRAGKAPSEYILRPEVARIILEHPRPFID</sequence>
<accession>A0RYU6</accession>
<reference key="1">
    <citation type="journal article" date="2006" name="Proc. Natl. Acad. Sci. U.S.A.">
        <title>Genomic analysis of the uncultivated marine crenarchaeote Cenarchaeum symbiosum.</title>
        <authorList>
            <person name="Hallam S.J."/>
            <person name="Konstantinidis K.T."/>
            <person name="Putnam N."/>
            <person name="Schleper C."/>
            <person name="Watanabe Y."/>
            <person name="Sugahara J."/>
            <person name="Preston C."/>
            <person name="de la Torre J."/>
            <person name="Richardson P.M."/>
            <person name="DeLong E.F."/>
        </authorList>
    </citation>
    <scope>NUCLEOTIDE SEQUENCE [LARGE SCALE GENOMIC DNA]</scope>
    <source>
        <strain>A</strain>
    </source>
</reference>
<organism>
    <name type="scientific">Cenarchaeum symbiosum (strain A)</name>
    <dbReference type="NCBI Taxonomy" id="414004"/>
    <lineage>
        <taxon>Archaea</taxon>
        <taxon>Nitrososphaerota</taxon>
        <taxon>Candidatus Cenarchaeales</taxon>
        <taxon>Candidatus Cenarchaeaceae</taxon>
        <taxon>Candidatus Cenarchaeum</taxon>
    </lineage>
</organism>
<comment type="catalytic activity">
    <reaction evidence="1">
        <text>sulfate + ATP + H(+) = adenosine 5'-phosphosulfate + diphosphate</text>
        <dbReference type="Rhea" id="RHEA:18133"/>
        <dbReference type="ChEBI" id="CHEBI:15378"/>
        <dbReference type="ChEBI" id="CHEBI:16189"/>
        <dbReference type="ChEBI" id="CHEBI:30616"/>
        <dbReference type="ChEBI" id="CHEBI:33019"/>
        <dbReference type="ChEBI" id="CHEBI:58243"/>
        <dbReference type="EC" id="2.7.7.4"/>
    </reaction>
</comment>
<comment type="pathway">
    <text evidence="1">Sulfur metabolism; hydrogen sulfide biosynthesis; sulfite from sulfate: step 1/3.</text>
</comment>
<comment type="similarity">
    <text evidence="1">Belongs to the sulfate adenylyltransferase family.</text>
</comment>
<keyword id="KW-0067">ATP-binding</keyword>
<keyword id="KW-0547">Nucleotide-binding</keyword>
<keyword id="KW-0548">Nucleotidyltransferase</keyword>
<keyword id="KW-1185">Reference proteome</keyword>
<keyword id="KW-0808">Transferase</keyword>
<feature type="chain" id="PRO_0000340643" description="Sulfate adenylyltransferase">
    <location>
        <begin position="1"/>
        <end position="379"/>
    </location>
</feature>
<evidence type="ECO:0000255" key="1">
    <source>
        <dbReference type="HAMAP-Rule" id="MF_00066"/>
    </source>
</evidence>
<proteinExistence type="inferred from homology"/>